<name>SYGB_SHEDO</name>
<reference key="1">
    <citation type="submission" date="2006-03" db="EMBL/GenBank/DDBJ databases">
        <title>Complete sequence of Shewanella denitrificans OS217.</title>
        <authorList>
            <consortium name="US DOE Joint Genome Institute"/>
            <person name="Copeland A."/>
            <person name="Lucas S."/>
            <person name="Lapidus A."/>
            <person name="Barry K."/>
            <person name="Detter J.C."/>
            <person name="Glavina del Rio T."/>
            <person name="Hammon N."/>
            <person name="Israni S."/>
            <person name="Dalin E."/>
            <person name="Tice H."/>
            <person name="Pitluck S."/>
            <person name="Brettin T."/>
            <person name="Bruce D."/>
            <person name="Han C."/>
            <person name="Tapia R."/>
            <person name="Gilna P."/>
            <person name="Kiss H."/>
            <person name="Schmutz J."/>
            <person name="Larimer F."/>
            <person name="Land M."/>
            <person name="Hauser L."/>
            <person name="Kyrpides N."/>
            <person name="Lykidis A."/>
            <person name="Richardson P."/>
        </authorList>
    </citation>
    <scope>NUCLEOTIDE SEQUENCE [LARGE SCALE GENOMIC DNA]</scope>
    <source>
        <strain>OS217 / ATCC BAA-1090 / DSM 15013</strain>
    </source>
</reference>
<accession>Q12TC1</accession>
<feature type="chain" id="PRO_1000006402" description="Glycine--tRNA ligase beta subunit">
    <location>
        <begin position="1"/>
        <end position="694"/>
    </location>
</feature>
<evidence type="ECO:0000255" key="1">
    <source>
        <dbReference type="HAMAP-Rule" id="MF_00255"/>
    </source>
</evidence>
<comment type="catalytic activity">
    <reaction evidence="1">
        <text>tRNA(Gly) + glycine + ATP = glycyl-tRNA(Gly) + AMP + diphosphate</text>
        <dbReference type="Rhea" id="RHEA:16013"/>
        <dbReference type="Rhea" id="RHEA-COMP:9664"/>
        <dbReference type="Rhea" id="RHEA-COMP:9683"/>
        <dbReference type="ChEBI" id="CHEBI:30616"/>
        <dbReference type="ChEBI" id="CHEBI:33019"/>
        <dbReference type="ChEBI" id="CHEBI:57305"/>
        <dbReference type="ChEBI" id="CHEBI:78442"/>
        <dbReference type="ChEBI" id="CHEBI:78522"/>
        <dbReference type="ChEBI" id="CHEBI:456215"/>
        <dbReference type="EC" id="6.1.1.14"/>
    </reaction>
</comment>
<comment type="subunit">
    <text evidence="1">Tetramer of two alpha and two beta subunits.</text>
</comment>
<comment type="subcellular location">
    <subcellularLocation>
        <location evidence="1">Cytoplasm</location>
    </subcellularLocation>
</comment>
<comment type="similarity">
    <text evidence="1">Belongs to the class-II aminoacyl-tRNA synthetase family.</text>
</comment>
<gene>
    <name evidence="1" type="primary">glyS</name>
    <name type="ordered locus">Sden_0008</name>
</gene>
<keyword id="KW-0030">Aminoacyl-tRNA synthetase</keyword>
<keyword id="KW-0067">ATP-binding</keyword>
<keyword id="KW-0963">Cytoplasm</keyword>
<keyword id="KW-0436">Ligase</keyword>
<keyword id="KW-0547">Nucleotide-binding</keyword>
<keyword id="KW-0648">Protein biosynthesis</keyword>
<keyword id="KW-1185">Reference proteome</keyword>
<dbReference type="EC" id="6.1.1.14" evidence="1"/>
<dbReference type="EMBL" id="CP000302">
    <property type="protein sequence ID" value="ABE53305.1"/>
    <property type="molecule type" value="Genomic_DNA"/>
</dbReference>
<dbReference type="RefSeq" id="WP_011494474.1">
    <property type="nucleotide sequence ID" value="NC_007954.1"/>
</dbReference>
<dbReference type="SMR" id="Q12TC1"/>
<dbReference type="STRING" id="318161.Sden_0008"/>
<dbReference type="KEGG" id="sdn:Sden_0008"/>
<dbReference type="eggNOG" id="COG0751">
    <property type="taxonomic scope" value="Bacteria"/>
</dbReference>
<dbReference type="HOGENOM" id="CLU_007220_2_2_6"/>
<dbReference type="OrthoDB" id="9775440at2"/>
<dbReference type="Proteomes" id="UP000001982">
    <property type="component" value="Chromosome"/>
</dbReference>
<dbReference type="GO" id="GO:0005829">
    <property type="term" value="C:cytosol"/>
    <property type="evidence" value="ECO:0007669"/>
    <property type="project" value="TreeGrafter"/>
</dbReference>
<dbReference type="GO" id="GO:0004814">
    <property type="term" value="F:arginine-tRNA ligase activity"/>
    <property type="evidence" value="ECO:0007669"/>
    <property type="project" value="InterPro"/>
</dbReference>
<dbReference type="GO" id="GO:0005524">
    <property type="term" value="F:ATP binding"/>
    <property type="evidence" value="ECO:0007669"/>
    <property type="project" value="UniProtKB-UniRule"/>
</dbReference>
<dbReference type="GO" id="GO:0004820">
    <property type="term" value="F:glycine-tRNA ligase activity"/>
    <property type="evidence" value="ECO:0007669"/>
    <property type="project" value="UniProtKB-UniRule"/>
</dbReference>
<dbReference type="GO" id="GO:0006420">
    <property type="term" value="P:arginyl-tRNA aminoacylation"/>
    <property type="evidence" value="ECO:0007669"/>
    <property type="project" value="InterPro"/>
</dbReference>
<dbReference type="GO" id="GO:0006426">
    <property type="term" value="P:glycyl-tRNA aminoacylation"/>
    <property type="evidence" value="ECO:0007669"/>
    <property type="project" value="UniProtKB-UniRule"/>
</dbReference>
<dbReference type="Gene3D" id="1.10.730.10">
    <property type="entry name" value="Isoleucyl-tRNA Synthetase, Domain 1"/>
    <property type="match status" value="1"/>
</dbReference>
<dbReference type="HAMAP" id="MF_00255">
    <property type="entry name" value="Gly_tRNA_synth_beta"/>
    <property type="match status" value="1"/>
</dbReference>
<dbReference type="InterPro" id="IPR008909">
    <property type="entry name" value="DALR_anticod-bd"/>
</dbReference>
<dbReference type="InterPro" id="IPR015944">
    <property type="entry name" value="Gly-tRNA-synth_bsu"/>
</dbReference>
<dbReference type="InterPro" id="IPR006194">
    <property type="entry name" value="Gly-tRNA-synth_heterodimer"/>
</dbReference>
<dbReference type="NCBIfam" id="TIGR00211">
    <property type="entry name" value="glyS"/>
    <property type="match status" value="1"/>
</dbReference>
<dbReference type="PANTHER" id="PTHR30075:SF2">
    <property type="entry name" value="GLYCINE--TRNA LIGASE, CHLOROPLASTIC_MITOCHONDRIAL 2"/>
    <property type="match status" value="1"/>
</dbReference>
<dbReference type="PANTHER" id="PTHR30075">
    <property type="entry name" value="GLYCYL-TRNA SYNTHETASE"/>
    <property type="match status" value="1"/>
</dbReference>
<dbReference type="Pfam" id="PF05746">
    <property type="entry name" value="DALR_1"/>
    <property type="match status" value="1"/>
</dbReference>
<dbReference type="Pfam" id="PF02092">
    <property type="entry name" value="tRNA_synt_2f"/>
    <property type="match status" value="1"/>
</dbReference>
<dbReference type="PRINTS" id="PR01045">
    <property type="entry name" value="TRNASYNTHGB"/>
</dbReference>
<dbReference type="SMART" id="SM00836">
    <property type="entry name" value="DALR_1"/>
    <property type="match status" value="1"/>
</dbReference>
<dbReference type="SUPFAM" id="SSF109604">
    <property type="entry name" value="HD-domain/PDEase-like"/>
    <property type="match status" value="1"/>
</dbReference>
<dbReference type="PROSITE" id="PS50861">
    <property type="entry name" value="AA_TRNA_LIGASE_II_GLYAB"/>
    <property type="match status" value="1"/>
</dbReference>
<protein>
    <recommendedName>
        <fullName evidence="1">Glycine--tRNA ligase beta subunit</fullName>
        <ecNumber evidence="1">6.1.1.14</ecNumber>
    </recommendedName>
    <alternativeName>
        <fullName evidence="1">Glycyl-tRNA synthetase beta subunit</fullName>
        <shortName evidence="1">GlyRS</shortName>
    </alternativeName>
</protein>
<sequence>MKFENLLIEIGTEELPPKSLRTLADSFLANFSDELVKADLPFTAATWYAAPRRLALSITGLAVAQADKVVEKRGPAVSSAFDADGNPTKAAQGWARGNGITVEQAERLVTDKGEWLVHQAKVVGVQTNSLIAAMAQRALDKLPIPKPMRWGANSTQFIRPVHTVTMLLGSELIGGELLGIKSDRIIRGHRFMGQASFQLDHADNYLSALKEQGKVLADYQLRKAIIKADAEAAAAKIGGVADIQEDLLEEVASLVEWPIVLTASFEEKFLNVPAEALVYTMKGDQKYFPVFDKSGKLLPNFIFVTNIESKDPQQIISGNEKVVRPRLADAEFFFNTDKKHSLASRLSSLETVVFQKQLGTLKARAERISQLAGFIATELNNNNLASSSVDAARAGLLSKADLMTNMVMEFTDTQGTMGMHYARLDGETEAVAIAIEEQYKPKFSGDTVPTASVSCAVALAEKLDTLVGIFGIGQAPKGAADPFALRRAAIGILRIIVENKLPLDLVDLIAKAQALHGTNLTNGNTSEDVLEFLMARFRSWYQDKGIQVDVILAVLARRPTRPADFDSRVNAVSHFRGLEASTALAAANKRVSNILAKVEGELPANVTPSLLTETAEKALAEQLASLQPKLAPLFATGDYQQALTLLAELRESVDQFFEDVMVMADDEALKNNRLALLNNLREQFLHVADISLLQ</sequence>
<proteinExistence type="inferred from homology"/>
<organism>
    <name type="scientific">Shewanella denitrificans (strain OS217 / ATCC BAA-1090 / DSM 15013)</name>
    <dbReference type="NCBI Taxonomy" id="318161"/>
    <lineage>
        <taxon>Bacteria</taxon>
        <taxon>Pseudomonadati</taxon>
        <taxon>Pseudomonadota</taxon>
        <taxon>Gammaproteobacteria</taxon>
        <taxon>Alteromonadales</taxon>
        <taxon>Shewanellaceae</taxon>
        <taxon>Shewanella</taxon>
    </lineage>
</organism>